<keyword id="KW-0004">4Fe-4S</keyword>
<keyword id="KW-0963">Cytoplasm</keyword>
<keyword id="KW-0408">Iron</keyword>
<keyword id="KW-0411">Iron-sulfur</keyword>
<keyword id="KW-0479">Metal-binding</keyword>
<keyword id="KW-1185">Reference proteome</keyword>
<keyword id="KW-0949">S-adenosyl-L-methionine</keyword>
<keyword id="KW-0808">Transferase</keyword>
<comment type="function">
    <text evidence="1">Catalyzes the radical-mediated insertion of two sulfur atoms into the C-6 and C-8 positions of the octanoyl moiety bound to the lipoyl domains of lipoate-dependent enzymes, thereby converting the octanoylated domains into lipoylated derivatives.</text>
</comment>
<comment type="catalytic activity">
    <reaction evidence="1">
        <text>[[Fe-S] cluster scaffold protein carrying a second [4Fe-4S](2+) cluster] + N(6)-octanoyl-L-lysyl-[protein] + 2 oxidized [2Fe-2S]-[ferredoxin] + 2 S-adenosyl-L-methionine + 4 H(+) = [[Fe-S] cluster scaffold protein] + N(6)-[(R)-dihydrolipoyl]-L-lysyl-[protein] + 4 Fe(3+) + 2 hydrogen sulfide + 2 5'-deoxyadenosine + 2 L-methionine + 2 reduced [2Fe-2S]-[ferredoxin]</text>
        <dbReference type="Rhea" id="RHEA:16585"/>
        <dbReference type="Rhea" id="RHEA-COMP:9928"/>
        <dbReference type="Rhea" id="RHEA-COMP:10000"/>
        <dbReference type="Rhea" id="RHEA-COMP:10001"/>
        <dbReference type="Rhea" id="RHEA-COMP:10475"/>
        <dbReference type="Rhea" id="RHEA-COMP:14568"/>
        <dbReference type="Rhea" id="RHEA-COMP:14569"/>
        <dbReference type="ChEBI" id="CHEBI:15378"/>
        <dbReference type="ChEBI" id="CHEBI:17319"/>
        <dbReference type="ChEBI" id="CHEBI:29034"/>
        <dbReference type="ChEBI" id="CHEBI:29919"/>
        <dbReference type="ChEBI" id="CHEBI:33722"/>
        <dbReference type="ChEBI" id="CHEBI:33737"/>
        <dbReference type="ChEBI" id="CHEBI:33738"/>
        <dbReference type="ChEBI" id="CHEBI:57844"/>
        <dbReference type="ChEBI" id="CHEBI:59789"/>
        <dbReference type="ChEBI" id="CHEBI:78809"/>
        <dbReference type="ChEBI" id="CHEBI:83100"/>
        <dbReference type="EC" id="2.8.1.8"/>
    </reaction>
</comment>
<comment type="cofactor">
    <cofactor evidence="1">
        <name>[4Fe-4S] cluster</name>
        <dbReference type="ChEBI" id="CHEBI:49883"/>
    </cofactor>
    <text evidence="1">Binds 2 [4Fe-4S] clusters per subunit. One cluster is coordinated with 3 cysteines and an exchangeable S-adenosyl-L-methionine.</text>
</comment>
<comment type="pathway">
    <text evidence="1">Protein modification; protein lipoylation via endogenous pathway; protein N(6)-(lipoyl)lysine from octanoyl-[acyl-carrier-protein]: step 2/2.</text>
</comment>
<comment type="subcellular location">
    <subcellularLocation>
        <location evidence="1">Cytoplasm</location>
    </subcellularLocation>
</comment>
<comment type="similarity">
    <text evidence="1">Belongs to the radical SAM superfamily. Lipoyl synthase family.</text>
</comment>
<protein>
    <recommendedName>
        <fullName evidence="1">Lipoyl synthase</fullName>
        <ecNumber evidence="1">2.8.1.8</ecNumber>
    </recommendedName>
    <alternativeName>
        <fullName evidence="1">Lip-syn</fullName>
        <shortName evidence="1">LS</shortName>
    </alternativeName>
    <alternativeName>
        <fullName evidence="1">Lipoate synthase</fullName>
    </alternativeName>
    <alternativeName>
        <fullName evidence="1">Lipoic acid synthase</fullName>
    </alternativeName>
    <alternativeName>
        <fullName evidence="1">Sulfur insertion protein LipA</fullName>
    </alternativeName>
</protein>
<accession>A5CCM4</accession>
<proteinExistence type="inferred from homology"/>
<dbReference type="EC" id="2.8.1.8" evidence="1"/>
<dbReference type="EMBL" id="AM494475">
    <property type="protein sequence ID" value="CAM79456.1"/>
    <property type="molecule type" value="Genomic_DNA"/>
</dbReference>
<dbReference type="RefSeq" id="WP_011944450.1">
    <property type="nucleotide sequence ID" value="NC_009488.1"/>
</dbReference>
<dbReference type="SMR" id="A5CCM4"/>
<dbReference type="KEGG" id="ots:OTBS_0390"/>
<dbReference type="eggNOG" id="COG0320">
    <property type="taxonomic scope" value="Bacteria"/>
</dbReference>
<dbReference type="HOGENOM" id="CLU_033144_2_1_5"/>
<dbReference type="UniPathway" id="UPA00538">
    <property type="reaction ID" value="UER00593"/>
</dbReference>
<dbReference type="Proteomes" id="UP000001565">
    <property type="component" value="Chromosome"/>
</dbReference>
<dbReference type="GO" id="GO:0005737">
    <property type="term" value="C:cytoplasm"/>
    <property type="evidence" value="ECO:0007669"/>
    <property type="project" value="UniProtKB-SubCell"/>
</dbReference>
<dbReference type="GO" id="GO:0051539">
    <property type="term" value="F:4 iron, 4 sulfur cluster binding"/>
    <property type="evidence" value="ECO:0007669"/>
    <property type="project" value="UniProtKB-UniRule"/>
</dbReference>
<dbReference type="GO" id="GO:0016992">
    <property type="term" value="F:lipoate synthase activity"/>
    <property type="evidence" value="ECO:0007669"/>
    <property type="project" value="UniProtKB-UniRule"/>
</dbReference>
<dbReference type="GO" id="GO:0046872">
    <property type="term" value="F:metal ion binding"/>
    <property type="evidence" value="ECO:0007669"/>
    <property type="project" value="UniProtKB-KW"/>
</dbReference>
<dbReference type="CDD" id="cd01335">
    <property type="entry name" value="Radical_SAM"/>
    <property type="match status" value="1"/>
</dbReference>
<dbReference type="FunFam" id="3.20.20.70:FF:000040">
    <property type="entry name" value="Lipoyl synthase"/>
    <property type="match status" value="1"/>
</dbReference>
<dbReference type="Gene3D" id="3.20.20.70">
    <property type="entry name" value="Aldolase class I"/>
    <property type="match status" value="1"/>
</dbReference>
<dbReference type="HAMAP" id="MF_00206">
    <property type="entry name" value="Lipoyl_synth"/>
    <property type="match status" value="1"/>
</dbReference>
<dbReference type="InterPro" id="IPR013785">
    <property type="entry name" value="Aldolase_TIM"/>
</dbReference>
<dbReference type="InterPro" id="IPR006638">
    <property type="entry name" value="Elp3/MiaA/NifB-like_rSAM"/>
</dbReference>
<dbReference type="InterPro" id="IPR003698">
    <property type="entry name" value="Lipoyl_synth"/>
</dbReference>
<dbReference type="InterPro" id="IPR007197">
    <property type="entry name" value="rSAM"/>
</dbReference>
<dbReference type="NCBIfam" id="TIGR00510">
    <property type="entry name" value="lipA"/>
    <property type="match status" value="1"/>
</dbReference>
<dbReference type="NCBIfam" id="NF004019">
    <property type="entry name" value="PRK05481.1"/>
    <property type="match status" value="1"/>
</dbReference>
<dbReference type="NCBIfam" id="NF009544">
    <property type="entry name" value="PRK12928.1"/>
    <property type="match status" value="1"/>
</dbReference>
<dbReference type="PANTHER" id="PTHR10949">
    <property type="entry name" value="LIPOYL SYNTHASE"/>
    <property type="match status" value="1"/>
</dbReference>
<dbReference type="PANTHER" id="PTHR10949:SF0">
    <property type="entry name" value="LIPOYL SYNTHASE, MITOCHONDRIAL"/>
    <property type="match status" value="1"/>
</dbReference>
<dbReference type="Pfam" id="PF04055">
    <property type="entry name" value="Radical_SAM"/>
    <property type="match status" value="1"/>
</dbReference>
<dbReference type="PIRSF" id="PIRSF005963">
    <property type="entry name" value="Lipoyl_synth"/>
    <property type="match status" value="1"/>
</dbReference>
<dbReference type="SFLD" id="SFLDF00271">
    <property type="entry name" value="lipoyl_synthase"/>
    <property type="match status" value="1"/>
</dbReference>
<dbReference type="SFLD" id="SFLDS00029">
    <property type="entry name" value="Radical_SAM"/>
    <property type="match status" value="1"/>
</dbReference>
<dbReference type="SMART" id="SM00729">
    <property type="entry name" value="Elp3"/>
    <property type="match status" value="1"/>
</dbReference>
<dbReference type="SUPFAM" id="SSF102114">
    <property type="entry name" value="Radical SAM enzymes"/>
    <property type="match status" value="1"/>
</dbReference>
<dbReference type="PROSITE" id="PS51918">
    <property type="entry name" value="RADICAL_SAM"/>
    <property type="match status" value="1"/>
</dbReference>
<sequence>MCSDKNITATALVRPSWLRVKAPFSDEYQSTNELIKSLKLNTVCKEAACPNIGECWSKKHATVMILGSICTRACAFCNVSTGKPEQVDEYEPYRLSEAVMKLGLKHVVITSVDRDDLSDGGASHFAKCITYIRERSPTTSIEVLTPDFLRKHEAWKIVAKARPDVYNHNIETVPSLYLKVRPGARYYNSLNLLHQVKIFDSSIFTKSGIMVGLGETKHEVLQVMDDLRAAEVDFLTIGQYLRPSARHIDVGRYVTPDEFDYYAKVARSKGFLMVSASPLTRSSYHAGEHFEKLKQMRLQNII</sequence>
<name>LIPA_ORITB</name>
<evidence type="ECO:0000255" key="1">
    <source>
        <dbReference type="HAMAP-Rule" id="MF_00206"/>
    </source>
</evidence>
<evidence type="ECO:0000255" key="2">
    <source>
        <dbReference type="PROSITE-ProRule" id="PRU01266"/>
    </source>
</evidence>
<organism>
    <name type="scientific">Orientia tsutsugamushi (strain Boryong)</name>
    <name type="common">Rickettsia tsutsugamushi</name>
    <dbReference type="NCBI Taxonomy" id="357244"/>
    <lineage>
        <taxon>Bacteria</taxon>
        <taxon>Pseudomonadati</taxon>
        <taxon>Pseudomonadota</taxon>
        <taxon>Alphaproteobacteria</taxon>
        <taxon>Rickettsiales</taxon>
        <taxon>Rickettsiaceae</taxon>
        <taxon>Rickettsieae</taxon>
        <taxon>Orientia</taxon>
    </lineage>
</organism>
<feature type="chain" id="PRO_0000325282" description="Lipoyl synthase">
    <location>
        <begin position="1"/>
        <end position="302"/>
    </location>
</feature>
<feature type="domain" description="Radical SAM core" evidence="2">
    <location>
        <begin position="56"/>
        <end position="272"/>
    </location>
</feature>
<feature type="binding site" evidence="1">
    <location>
        <position position="44"/>
    </location>
    <ligand>
        <name>[4Fe-4S] cluster</name>
        <dbReference type="ChEBI" id="CHEBI:49883"/>
        <label>1</label>
    </ligand>
</feature>
<feature type="binding site" evidence="1">
    <location>
        <position position="49"/>
    </location>
    <ligand>
        <name>[4Fe-4S] cluster</name>
        <dbReference type="ChEBI" id="CHEBI:49883"/>
        <label>1</label>
    </ligand>
</feature>
<feature type="binding site" evidence="1">
    <location>
        <position position="55"/>
    </location>
    <ligand>
        <name>[4Fe-4S] cluster</name>
        <dbReference type="ChEBI" id="CHEBI:49883"/>
        <label>1</label>
    </ligand>
</feature>
<feature type="binding site" evidence="1">
    <location>
        <position position="70"/>
    </location>
    <ligand>
        <name>[4Fe-4S] cluster</name>
        <dbReference type="ChEBI" id="CHEBI:49883"/>
        <label>2</label>
        <note>4Fe-4S-S-AdoMet</note>
    </ligand>
</feature>
<feature type="binding site" evidence="1">
    <location>
        <position position="74"/>
    </location>
    <ligand>
        <name>[4Fe-4S] cluster</name>
        <dbReference type="ChEBI" id="CHEBI:49883"/>
        <label>2</label>
        <note>4Fe-4S-S-AdoMet</note>
    </ligand>
</feature>
<feature type="binding site" evidence="1">
    <location>
        <position position="77"/>
    </location>
    <ligand>
        <name>[4Fe-4S] cluster</name>
        <dbReference type="ChEBI" id="CHEBI:49883"/>
        <label>2</label>
        <note>4Fe-4S-S-AdoMet</note>
    </ligand>
</feature>
<feature type="binding site" evidence="1">
    <location>
        <position position="283"/>
    </location>
    <ligand>
        <name>[4Fe-4S] cluster</name>
        <dbReference type="ChEBI" id="CHEBI:49883"/>
        <label>1</label>
    </ligand>
</feature>
<gene>
    <name evidence="1" type="primary">lipA</name>
    <name type="ordered locus">OTBS_0390</name>
</gene>
<reference key="1">
    <citation type="journal article" date="2007" name="Proc. Natl. Acad. Sci. U.S.A.">
        <title>The Orientia tsutsugamushi genome reveals massive proliferation of conjugative type IV secretion system and host-cell interaction genes.</title>
        <authorList>
            <person name="Cho N.-H."/>
            <person name="Kim H.-R."/>
            <person name="Lee J.-H."/>
            <person name="Kim S.-Y."/>
            <person name="Kim J."/>
            <person name="Cha S."/>
            <person name="Kim S.-Y."/>
            <person name="Darby A.C."/>
            <person name="Fuxelius H.-H."/>
            <person name="Yin J."/>
            <person name="Kim J.H."/>
            <person name="Kim J."/>
            <person name="Lee S.J."/>
            <person name="Koh Y.-S."/>
            <person name="Jang W.-J."/>
            <person name="Park K.-H."/>
            <person name="Andersson S.G.E."/>
            <person name="Choi M.-S."/>
            <person name="Kim I.-S."/>
        </authorList>
    </citation>
    <scope>NUCLEOTIDE SEQUENCE [LARGE SCALE GENOMIC DNA]</scope>
    <source>
        <strain>Boryong</strain>
    </source>
</reference>